<gene>
    <name evidence="1" type="primary">atpE</name>
    <name type="ordered locus">rrnAC3156</name>
</gene>
<reference key="1">
    <citation type="journal article" date="2004" name="Genome Res.">
        <title>Genome sequence of Haloarcula marismortui: a halophilic archaeon from the Dead Sea.</title>
        <authorList>
            <person name="Baliga N.S."/>
            <person name="Bonneau R."/>
            <person name="Facciotti M.T."/>
            <person name="Pan M."/>
            <person name="Glusman G."/>
            <person name="Deutsch E.W."/>
            <person name="Shannon P."/>
            <person name="Chiu Y."/>
            <person name="Weng R.S."/>
            <person name="Gan R.R."/>
            <person name="Hung P."/>
            <person name="Date S.V."/>
            <person name="Marcotte E."/>
            <person name="Hood L."/>
            <person name="Ng W.V."/>
        </authorList>
    </citation>
    <scope>NUCLEOTIDE SEQUENCE [LARGE SCALE GENOMIC DNA]</scope>
    <source>
        <strain>ATCC 43049 / DSM 3752 / JCM 8966 / VKM B-1809</strain>
    </source>
</reference>
<proteinExistence type="inferred from homology"/>
<keyword id="KW-0066">ATP synthesis</keyword>
<keyword id="KW-1003">Cell membrane</keyword>
<keyword id="KW-0375">Hydrogen ion transport</keyword>
<keyword id="KW-0406">Ion transport</keyword>
<keyword id="KW-0472">Membrane</keyword>
<keyword id="KW-1185">Reference proteome</keyword>
<keyword id="KW-0813">Transport</keyword>
<accession>Q5UXZ1</accession>
<dbReference type="EMBL" id="AY596297">
    <property type="protein sequence ID" value="AAV47862.1"/>
    <property type="molecule type" value="Genomic_DNA"/>
</dbReference>
<dbReference type="RefSeq" id="WP_004964545.1">
    <property type="nucleotide sequence ID" value="NZ_CP039138.1"/>
</dbReference>
<dbReference type="SMR" id="Q5UXZ1"/>
<dbReference type="STRING" id="272569.rrnAC3156"/>
<dbReference type="PaxDb" id="272569-rrnAC3156"/>
<dbReference type="EnsemblBacteria" id="AAV47862">
    <property type="protein sequence ID" value="AAV47862"/>
    <property type="gene ID" value="rrnAC3156"/>
</dbReference>
<dbReference type="KEGG" id="hma:rrnAC3156"/>
<dbReference type="PATRIC" id="fig|272569.17.peg.3696"/>
<dbReference type="eggNOG" id="arCOG00869">
    <property type="taxonomic scope" value="Archaea"/>
</dbReference>
<dbReference type="HOGENOM" id="CLU_120786_0_0_2"/>
<dbReference type="Proteomes" id="UP000001169">
    <property type="component" value="Chromosome I"/>
</dbReference>
<dbReference type="GO" id="GO:0005886">
    <property type="term" value="C:plasma membrane"/>
    <property type="evidence" value="ECO:0007669"/>
    <property type="project" value="UniProtKB-SubCell"/>
</dbReference>
<dbReference type="GO" id="GO:0033178">
    <property type="term" value="C:proton-transporting two-sector ATPase complex, catalytic domain"/>
    <property type="evidence" value="ECO:0007669"/>
    <property type="project" value="InterPro"/>
</dbReference>
<dbReference type="GO" id="GO:0005524">
    <property type="term" value="F:ATP binding"/>
    <property type="evidence" value="ECO:0007669"/>
    <property type="project" value="UniProtKB-UniRule"/>
</dbReference>
<dbReference type="GO" id="GO:0046933">
    <property type="term" value="F:proton-transporting ATP synthase activity, rotational mechanism"/>
    <property type="evidence" value="ECO:0007669"/>
    <property type="project" value="UniProtKB-UniRule"/>
</dbReference>
<dbReference type="GO" id="GO:0046961">
    <property type="term" value="F:proton-transporting ATPase activity, rotational mechanism"/>
    <property type="evidence" value="ECO:0007669"/>
    <property type="project" value="InterPro"/>
</dbReference>
<dbReference type="GO" id="GO:0042777">
    <property type="term" value="P:proton motive force-driven plasma membrane ATP synthesis"/>
    <property type="evidence" value="ECO:0007669"/>
    <property type="project" value="UniProtKB-UniRule"/>
</dbReference>
<dbReference type="Gene3D" id="3.30.2320.30">
    <property type="entry name" value="ATP synthase, E subunit, C-terminal"/>
    <property type="match status" value="1"/>
</dbReference>
<dbReference type="Gene3D" id="1.20.5.620">
    <property type="entry name" value="F1F0 ATP synthase subunit B, membrane domain"/>
    <property type="match status" value="1"/>
</dbReference>
<dbReference type="HAMAP" id="MF_00311">
    <property type="entry name" value="ATP_synth_E_arch"/>
    <property type="match status" value="1"/>
</dbReference>
<dbReference type="InterPro" id="IPR038495">
    <property type="entry name" value="ATPase_E_C"/>
</dbReference>
<dbReference type="InterPro" id="IPR002842">
    <property type="entry name" value="ATPase_V1_Esu"/>
</dbReference>
<dbReference type="NCBIfam" id="NF002629">
    <property type="entry name" value="PRK02292.1"/>
    <property type="match status" value="1"/>
</dbReference>
<dbReference type="PANTHER" id="PTHR45715">
    <property type="entry name" value="ATPASE H+-TRANSPORTING V1 SUBUNIT E1A-RELATED"/>
    <property type="match status" value="1"/>
</dbReference>
<dbReference type="Pfam" id="PF01991">
    <property type="entry name" value="vATP-synt_E"/>
    <property type="match status" value="1"/>
</dbReference>
<dbReference type="SUPFAM" id="SSF160527">
    <property type="entry name" value="V-type ATPase subunit E-like"/>
    <property type="match status" value="1"/>
</dbReference>
<comment type="function">
    <text evidence="1">Component of the A-type ATP synthase that produces ATP from ADP in the presence of a proton gradient across the membrane.</text>
</comment>
<comment type="subunit">
    <text evidence="1">Has multiple subunits with at least A(3), B(3), C, D, E, F, H, I and proteolipid K(x).</text>
</comment>
<comment type="subcellular location">
    <subcellularLocation>
        <location evidence="1">Cell membrane</location>
        <topology evidence="1">Peripheral membrane protein</topology>
    </subcellularLocation>
</comment>
<comment type="similarity">
    <text evidence="1">Belongs to the V-ATPase E subunit family.</text>
</comment>
<organism>
    <name type="scientific">Haloarcula marismortui (strain ATCC 43049 / DSM 3752 / JCM 8966 / VKM B-1809)</name>
    <name type="common">Halobacterium marismortui</name>
    <dbReference type="NCBI Taxonomy" id="272569"/>
    <lineage>
        <taxon>Archaea</taxon>
        <taxon>Methanobacteriati</taxon>
        <taxon>Methanobacteriota</taxon>
        <taxon>Stenosarchaea group</taxon>
        <taxon>Halobacteria</taxon>
        <taxon>Halobacteriales</taxon>
        <taxon>Haloarculaceae</taxon>
        <taxon>Haloarcula</taxon>
    </lineage>
</organism>
<name>AATE_HALMA</name>
<protein>
    <recommendedName>
        <fullName evidence="1">A-type ATP synthase subunit E</fullName>
    </recommendedName>
</protein>
<evidence type="ECO:0000255" key="1">
    <source>
        <dbReference type="HAMAP-Rule" id="MF_00311"/>
    </source>
</evidence>
<evidence type="ECO:0000256" key="2">
    <source>
        <dbReference type="SAM" id="MobiDB-lite"/>
    </source>
</evidence>
<feature type="chain" id="PRO_1000059407" description="A-type ATP synthase subunit E">
    <location>
        <begin position="1"/>
        <end position="194"/>
    </location>
</feature>
<feature type="region of interest" description="Disordered" evidence="2">
    <location>
        <begin position="35"/>
        <end position="56"/>
    </location>
</feature>
<feature type="compositionally biased region" description="Basic and acidic residues" evidence="2">
    <location>
        <begin position="41"/>
        <end position="56"/>
    </location>
</feature>
<sequence>MSLQTVVEDIRDEARARAQEISDAADERAEEIIADAEADADQIREEREAEVERTIEQEREQRLSSAKLEAKQARLNARRDILEDVHGDVEDALAALEGDRREELTRALLDAAVDEFDDSDELSVYGRASDQSLLEDVLDDYDGATYAGERDCLGGVVVESNESRVRVNNTFDSILEDVWEDNLKAISDRLFEDQ</sequence>